<dbReference type="EMBL" id="CP000267">
    <property type="protein sequence ID" value="ABD70628.1"/>
    <property type="molecule type" value="Genomic_DNA"/>
</dbReference>
<dbReference type="RefSeq" id="WP_011465194.1">
    <property type="nucleotide sequence ID" value="NC_007908.1"/>
</dbReference>
<dbReference type="SMR" id="Q21UC5"/>
<dbReference type="STRING" id="338969.Rfer_2917"/>
<dbReference type="KEGG" id="rfr:Rfer_2917"/>
<dbReference type="eggNOG" id="COG1965">
    <property type="taxonomic scope" value="Bacteria"/>
</dbReference>
<dbReference type="HOGENOM" id="CLU_080880_3_0_4"/>
<dbReference type="OrthoDB" id="285675at2"/>
<dbReference type="Proteomes" id="UP000008332">
    <property type="component" value="Chromosome"/>
</dbReference>
<dbReference type="GO" id="GO:0005829">
    <property type="term" value="C:cytosol"/>
    <property type="evidence" value="ECO:0007669"/>
    <property type="project" value="TreeGrafter"/>
</dbReference>
<dbReference type="GO" id="GO:0008199">
    <property type="term" value="F:ferric iron binding"/>
    <property type="evidence" value="ECO:0007669"/>
    <property type="project" value="InterPro"/>
</dbReference>
<dbReference type="GO" id="GO:0008198">
    <property type="term" value="F:ferrous iron binding"/>
    <property type="evidence" value="ECO:0007669"/>
    <property type="project" value="TreeGrafter"/>
</dbReference>
<dbReference type="GO" id="GO:0016226">
    <property type="term" value="P:iron-sulfur cluster assembly"/>
    <property type="evidence" value="ECO:0007669"/>
    <property type="project" value="UniProtKB-UniRule"/>
</dbReference>
<dbReference type="Gene3D" id="3.30.920.10">
    <property type="entry name" value="Frataxin/CyaY"/>
    <property type="match status" value="1"/>
</dbReference>
<dbReference type="HAMAP" id="MF_00142">
    <property type="entry name" value="CyaY"/>
    <property type="match status" value="1"/>
</dbReference>
<dbReference type="InterPro" id="IPR047584">
    <property type="entry name" value="CyaY"/>
</dbReference>
<dbReference type="InterPro" id="IPR002908">
    <property type="entry name" value="Frataxin/CyaY"/>
</dbReference>
<dbReference type="InterPro" id="IPR036524">
    <property type="entry name" value="Frataxin/CyaY_sf"/>
</dbReference>
<dbReference type="InterPro" id="IPR020895">
    <property type="entry name" value="Frataxin_CS"/>
</dbReference>
<dbReference type="NCBIfam" id="TIGR03421">
    <property type="entry name" value="FeS_CyaY"/>
    <property type="match status" value="1"/>
</dbReference>
<dbReference type="PANTHER" id="PTHR16821">
    <property type="entry name" value="FRATAXIN"/>
    <property type="match status" value="1"/>
</dbReference>
<dbReference type="PANTHER" id="PTHR16821:SF2">
    <property type="entry name" value="FRATAXIN, MITOCHONDRIAL"/>
    <property type="match status" value="1"/>
</dbReference>
<dbReference type="Pfam" id="PF01491">
    <property type="entry name" value="Frataxin_Cyay"/>
    <property type="match status" value="1"/>
</dbReference>
<dbReference type="SMART" id="SM01219">
    <property type="entry name" value="Frataxin_Cyay"/>
    <property type="match status" value="1"/>
</dbReference>
<dbReference type="SUPFAM" id="SSF55387">
    <property type="entry name" value="Frataxin/Nqo15-like"/>
    <property type="match status" value="1"/>
</dbReference>
<dbReference type="PROSITE" id="PS01344">
    <property type="entry name" value="FRATAXIN_1"/>
    <property type="match status" value="1"/>
</dbReference>
<dbReference type="PROSITE" id="PS50810">
    <property type="entry name" value="FRATAXIN_2"/>
    <property type="match status" value="1"/>
</dbReference>
<keyword id="KW-0408">Iron</keyword>
<keyword id="KW-0479">Metal-binding</keyword>
<keyword id="KW-1185">Reference proteome</keyword>
<evidence type="ECO:0000255" key="1">
    <source>
        <dbReference type="HAMAP-Rule" id="MF_00142"/>
    </source>
</evidence>
<feature type="chain" id="PRO_1000010950" description="Iron-sulfur cluster assembly protein CyaY">
    <location>
        <begin position="1"/>
        <end position="109"/>
    </location>
</feature>
<comment type="function">
    <text evidence="1">Involved in iron-sulfur (Fe-S) cluster assembly. May act as a regulator of Fe-S biogenesis.</text>
</comment>
<comment type="similarity">
    <text evidence="1">Belongs to the frataxin family.</text>
</comment>
<name>CYAY_ALBFT</name>
<reference key="1">
    <citation type="submission" date="2006-02" db="EMBL/GenBank/DDBJ databases">
        <title>Complete sequence of chromosome of Rhodoferax ferrireducens DSM 15236.</title>
        <authorList>
            <person name="Copeland A."/>
            <person name="Lucas S."/>
            <person name="Lapidus A."/>
            <person name="Barry K."/>
            <person name="Detter J.C."/>
            <person name="Glavina del Rio T."/>
            <person name="Hammon N."/>
            <person name="Israni S."/>
            <person name="Pitluck S."/>
            <person name="Brettin T."/>
            <person name="Bruce D."/>
            <person name="Han C."/>
            <person name="Tapia R."/>
            <person name="Gilna P."/>
            <person name="Kiss H."/>
            <person name="Schmutz J."/>
            <person name="Larimer F."/>
            <person name="Land M."/>
            <person name="Kyrpides N."/>
            <person name="Ivanova N."/>
            <person name="Richardson P."/>
        </authorList>
    </citation>
    <scope>NUCLEOTIDE SEQUENCE [LARGE SCALE GENOMIC DNA]</scope>
    <source>
        <strain>ATCC BAA-621 / DSM 15236 / T118</strain>
    </source>
</reference>
<protein>
    <recommendedName>
        <fullName evidence="1">Iron-sulfur cluster assembly protein CyaY</fullName>
    </recommendedName>
</protein>
<organism>
    <name type="scientific">Albidiferax ferrireducens (strain ATCC BAA-621 / DSM 15236 / T118)</name>
    <name type="common">Rhodoferax ferrireducens</name>
    <dbReference type="NCBI Taxonomy" id="338969"/>
    <lineage>
        <taxon>Bacteria</taxon>
        <taxon>Pseudomonadati</taxon>
        <taxon>Pseudomonadota</taxon>
        <taxon>Betaproteobacteria</taxon>
        <taxon>Burkholderiales</taxon>
        <taxon>Comamonadaceae</taxon>
        <taxon>Rhodoferax</taxon>
    </lineage>
</organism>
<proteinExistence type="inferred from homology"/>
<accession>Q21UC5</accession>
<gene>
    <name evidence="1" type="primary">cyaY</name>
    <name type="ordered locus">Rfer_2917</name>
</gene>
<sequence length="109" mass="12269">MNDLEFMDRAENLLKAVETSCDRINDQTLADIDSQRVGSMVTLVFSNKSQIVINLQKPLHEIWLAAKSGGYHYKFDNKQWLDTKGQGEFFANLSRCASEQAGCPLVLNS</sequence>